<keyword id="KW-0025">Alternative splicing</keyword>
<keyword id="KW-0217">Developmental protein</keyword>
<keyword id="KW-0238">DNA-binding</keyword>
<keyword id="KW-0287">Flowering</keyword>
<keyword id="KW-0539">Nucleus</keyword>
<keyword id="KW-1185">Reference proteome</keyword>
<keyword id="KW-0804">Transcription</keyword>
<keyword id="KW-0805">Transcription regulation</keyword>
<sequence length="256" mass="28874">MGRGRIEIKKIENINSRQVTFSKRRNGLIKKAKELSILCDAEVALIIFSSTGKIYDFSSVCMEQILSRYGYTTASTEHKQQREHQLLICASHGNEAVLRNDDSMKGELERLQLAIERLKGKELEGMSFPDLISLENQLNESLHSVKDQKTQILLNQIERSRIQEKKALEENQILRKQVEMLGRGSGPKVLNERPQDSSPEADPESSSSEEDENDNEEHHSDTSLQLGLSSTGYCTKRKKPKIELVCDNSGSQVASD</sequence>
<comment type="function">
    <text evidence="8 9 10">Probable transcription factor involved in the negative regulation of flowering, probably through the photoperiodic pathway. Prevents premature flowering. Downstream regulator of a subset of the MIKC* MADS-controlled genes required during pollen maturation.</text>
</comment>
<comment type="interaction">
    <interactant intactId="EBI-15197363">
        <id>Q9M2K8</id>
    </interactant>
    <interactant intactId="EBI-15191543">
        <id>Q05153</id>
        <label>SSRP1</label>
    </interactant>
    <organismsDiffer>false</organismsDiffer>
    <experiments>3</experiments>
</comment>
<comment type="subcellular location">
    <subcellularLocation>
        <location evidence="1">Nucleus</location>
    </subcellularLocation>
</comment>
<comment type="alternative products">
    <event type="alternative splicing"/>
    <isoform>
        <id>Q9M2K8-1</id>
        <name>1</name>
        <sequence type="displayed"/>
    </isoform>
    <isoform>
        <id>Q9M2K8-2</id>
        <name>2</name>
        <sequence type="described" ref="VSP_041689"/>
    </isoform>
    <isoform>
        <id>Q9M2K8-3</id>
        <name>3</name>
        <sequence type="described" ref="VSP_041690 VSP_041691"/>
    </isoform>
</comment>
<comment type="tissue specificity">
    <text evidence="4 5 6 7 8">Mostly expressed in pollen, roots, flowers and siliques, and to a lower extent, in stems and leaves. Expressed in the endosperm and in developing male and female gametophytes. Also present in seedlings.</text>
</comment>
<comment type="developmental stage">
    <text evidence="4 8">During the reproductive phase, accumulates in immature buds and at the base of the floral organs, and in the receptacle, ovules, anther filaments, and stigma and style of open flowers. Later observed in sporogenous tissue of anthers. During male gametogenesis, expressed in the microspores before they separate from each other. Later present at high levels within pollen grains up to stage 13 of flower development, when anthers dehisce. During carpel development, first detected in developing ovules. After fertilization, confined to globular structures or nodules of proliferating free nuclear endosperm required for embryo development. Disappears from the endosperm at to the heart stage of embryo development, when very little nuclear endosperm remains. Never detected in developing embryos at any stage. In young seedlings, present everywhere except in a portion of the hypocotyl and in newly emerging leaves.</text>
</comment>
<comment type="disruption phenotype">
    <text evidence="8 9 10">Altered expression of MIKC* MADS-controlled genes during pollen maturation. Early flowering under short-days conditions (SD) when combined with AGL15 disruption.</text>
</comment>
<evidence type="ECO:0000255" key="1">
    <source>
        <dbReference type="PROSITE-ProRule" id="PRU00251"/>
    </source>
</evidence>
<evidence type="ECO:0000255" key="2">
    <source>
        <dbReference type="PROSITE-ProRule" id="PRU00629"/>
    </source>
</evidence>
<evidence type="ECO:0000256" key="3">
    <source>
        <dbReference type="SAM" id="MobiDB-lite"/>
    </source>
</evidence>
<evidence type="ECO:0000269" key="4">
    <source>
    </source>
</evidence>
<evidence type="ECO:0000269" key="5">
    <source>
    </source>
</evidence>
<evidence type="ECO:0000269" key="6">
    <source>
    </source>
</evidence>
<evidence type="ECO:0000269" key="7">
    <source>
    </source>
</evidence>
<evidence type="ECO:0000269" key="8">
    <source>
    </source>
</evidence>
<evidence type="ECO:0000269" key="9">
    <source>
    </source>
</evidence>
<evidence type="ECO:0000269" key="10">
    <source>
    </source>
</evidence>
<evidence type="ECO:0000303" key="11">
    <source ref="4"/>
</evidence>
<evidence type="ECO:0000303" key="12">
    <source ref="5"/>
</evidence>
<evidence type="ECO:0000305" key="13"/>
<proteinExistence type="evidence at protein level"/>
<accession>Q9M2K8</accession>
<accession>Q1ECG0</accession>
<accession>Q570M9</accession>
<accession>Q8LAS6</accession>
<organism>
    <name type="scientific">Arabidopsis thaliana</name>
    <name type="common">Mouse-ear cress</name>
    <dbReference type="NCBI Taxonomy" id="3702"/>
    <lineage>
        <taxon>Eukaryota</taxon>
        <taxon>Viridiplantae</taxon>
        <taxon>Streptophyta</taxon>
        <taxon>Embryophyta</taxon>
        <taxon>Tracheophyta</taxon>
        <taxon>Spermatophyta</taxon>
        <taxon>Magnoliopsida</taxon>
        <taxon>eudicotyledons</taxon>
        <taxon>Gunneridae</taxon>
        <taxon>Pentapetalae</taxon>
        <taxon>rosids</taxon>
        <taxon>malvids</taxon>
        <taxon>Brassicales</taxon>
        <taxon>Brassicaceae</taxon>
        <taxon>Camelineae</taxon>
        <taxon>Arabidopsis</taxon>
    </lineage>
</organism>
<reference key="1">
    <citation type="journal article" date="2000" name="Plant J.">
        <title>MADS-box gene evolution beyond flowers: expression in pollen, endosperm, guard cells, roots and trichomes.</title>
        <authorList>
            <person name="Alvarez-Buylla E.R."/>
            <person name="Liljegren S.J."/>
            <person name="Pelaz S."/>
            <person name="Gold S.E."/>
            <person name="Burgeff C."/>
            <person name="Ditta G.S."/>
            <person name="Vergara-Silva F."/>
            <person name="Yanofsky M.F."/>
        </authorList>
    </citation>
    <scope>NUCLEOTIDE SEQUENCE [MRNA] (ISOFORM 1)</scope>
    <scope>TISSUE SPECIFICITY</scope>
    <scope>DEVELOPMENTAL STAGE</scope>
    <source>
        <strain>cv. Landsberg erecta</strain>
    </source>
</reference>
<reference key="2">
    <citation type="journal article" date="2000" name="Nature">
        <title>Sequence and analysis of chromosome 3 of the plant Arabidopsis thaliana.</title>
        <authorList>
            <person name="Salanoubat M."/>
            <person name="Lemcke K."/>
            <person name="Rieger M."/>
            <person name="Ansorge W."/>
            <person name="Unseld M."/>
            <person name="Fartmann B."/>
            <person name="Valle G."/>
            <person name="Bloecker H."/>
            <person name="Perez-Alonso M."/>
            <person name="Obermaier B."/>
            <person name="Delseny M."/>
            <person name="Boutry M."/>
            <person name="Grivell L.A."/>
            <person name="Mache R."/>
            <person name="Puigdomenech P."/>
            <person name="De Simone V."/>
            <person name="Choisne N."/>
            <person name="Artiguenave F."/>
            <person name="Robert C."/>
            <person name="Brottier P."/>
            <person name="Wincker P."/>
            <person name="Cattolico L."/>
            <person name="Weissenbach J."/>
            <person name="Saurin W."/>
            <person name="Quetier F."/>
            <person name="Schaefer M."/>
            <person name="Mueller-Auer S."/>
            <person name="Gabel C."/>
            <person name="Fuchs M."/>
            <person name="Benes V."/>
            <person name="Wurmbach E."/>
            <person name="Drzonek H."/>
            <person name="Erfle H."/>
            <person name="Jordan N."/>
            <person name="Bangert S."/>
            <person name="Wiedelmann R."/>
            <person name="Kranz H."/>
            <person name="Voss H."/>
            <person name="Holland R."/>
            <person name="Brandt P."/>
            <person name="Nyakatura G."/>
            <person name="Vezzi A."/>
            <person name="D'Angelo M."/>
            <person name="Pallavicini A."/>
            <person name="Toppo S."/>
            <person name="Simionati B."/>
            <person name="Conrad A."/>
            <person name="Hornischer K."/>
            <person name="Kauer G."/>
            <person name="Loehnert T.-H."/>
            <person name="Nordsiek G."/>
            <person name="Reichelt J."/>
            <person name="Scharfe M."/>
            <person name="Schoen O."/>
            <person name="Bargues M."/>
            <person name="Terol J."/>
            <person name="Climent J."/>
            <person name="Navarro P."/>
            <person name="Collado C."/>
            <person name="Perez-Perez A."/>
            <person name="Ottenwaelder B."/>
            <person name="Duchemin D."/>
            <person name="Cooke R."/>
            <person name="Laudie M."/>
            <person name="Berger-Llauro C."/>
            <person name="Purnelle B."/>
            <person name="Masuy D."/>
            <person name="de Haan M."/>
            <person name="Maarse A.C."/>
            <person name="Alcaraz J.-P."/>
            <person name="Cottet A."/>
            <person name="Casacuberta E."/>
            <person name="Monfort A."/>
            <person name="Argiriou A."/>
            <person name="Flores M."/>
            <person name="Liguori R."/>
            <person name="Vitale D."/>
            <person name="Mannhaupt G."/>
            <person name="Haase D."/>
            <person name="Schoof H."/>
            <person name="Rudd S."/>
            <person name="Zaccaria P."/>
            <person name="Mewes H.-W."/>
            <person name="Mayer K.F.X."/>
            <person name="Kaul S."/>
            <person name="Town C.D."/>
            <person name="Koo H.L."/>
            <person name="Tallon L.J."/>
            <person name="Jenkins J."/>
            <person name="Rooney T."/>
            <person name="Rizzo M."/>
            <person name="Walts A."/>
            <person name="Utterback T."/>
            <person name="Fujii C.Y."/>
            <person name="Shea T.P."/>
            <person name="Creasy T.H."/>
            <person name="Haas B."/>
            <person name="Maiti R."/>
            <person name="Wu D."/>
            <person name="Peterson J."/>
            <person name="Van Aken S."/>
            <person name="Pai G."/>
            <person name="Militscher J."/>
            <person name="Sellers P."/>
            <person name="Gill J.E."/>
            <person name="Feldblyum T.V."/>
            <person name="Preuss D."/>
            <person name="Lin X."/>
            <person name="Nierman W.C."/>
            <person name="Salzberg S.L."/>
            <person name="White O."/>
            <person name="Venter J.C."/>
            <person name="Fraser C.M."/>
            <person name="Kaneko T."/>
            <person name="Nakamura Y."/>
            <person name="Sato S."/>
            <person name="Kato T."/>
            <person name="Asamizu E."/>
            <person name="Sasamoto S."/>
            <person name="Kimura T."/>
            <person name="Idesawa K."/>
            <person name="Kawashima K."/>
            <person name="Kishida Y."/>
            <person name="Kiyokawa C."/>
            <person name="Kohara M."/>
            <person name="Matsumoto M."/>
            <person name="Matsuno A."/>
            <person name="Muraki A."/>
            <person name="Nakayama S."/>
            <person name="Nakazaki N."/>
            <person name="Shinpo S."/>
            <person name="Takeuchi C."/>
            <person name="Wada T."/>
            <person name="Watanabe A."/>
            <person name="Yamada M."/>
            <person name="Yasuda M."/>
            <person name="Tabata S."/>
        </authorList>
    </citation>
    <scope>NUCLEOTIDE SEQUENCE [LARGE SCALE GENOMIC DNA]</scope>
    <source>
        <strain>cv. Columbia</strain>
    </source>
</reference>
<reference key="3">
    <citation type="journal article" date="2017" name="Plant J.">
        <title>Araport11: a complete reannotation of the Arabidopsis thaliana reference genome.</title>
        <authorList>
            <person name="Cheng C.Y."/>
            <person name="Krishnakumar V."/>
            <person name="Chan A.P."/>
            <person name="Thibaud-Nissen F."/>
            <person name="Schobel S."/>
            <person name="Town C.D."/>
        </authorList>
    </citation>
    <scope>GENOME REANNOTATION</scope>
    <source>
        <strain>cv. Columbia</strain>
    </source>
</reference>
<reference key="4">
    <citation type="submission" date="2005-03" db="EMBL/GenBank/DDBJ databases">
        <title>Large-scale analysis of RIKEN Arabidopsis full-length (RAFL) cDNAs.</title>
        <authorList>
            <person name="Totoki Y."/>
            <person name="Seki M."/>
            <person name="Ishida J."/>
            <person name="Nakajima M."/>
            <person name="Enju A."/>
            <person name="Kamiya A."/>
            <person name="Narusaka M."/>
            <person name="Shin-i T."/>
            <person name="Nakagawa M."/>
            <person name="Sakamoto N."/>
            <person name="Oishi K."/>
            <person name="Kohara Y."/>
            <person name="Kobayashi M."/>
            <person name="Toyoda A."/>
            <person name="Sakaki Y."/>
            <person name="Sakurai T."/>
            <person name="Iida K."/>
            <person name="Akiyama K."/>
            <person name="Satou M."/>
            <person name="Toyoda T."/>
            <person name="Konagaya A."/>
            <person name="Carninci P."/>
            <person name="Kawai J."/>
            <person name="Hayashizaki Y."/>
            <person name="Shinozaki K."/>
        </authorList>
    </citation>
    <scope>NUCLEOTIDE SEQUENCE [LARGE SCALE MRNA] (ISOFORMS 1 AND 3)</scope>
    <source>
        <strain>cv. Columbia</strain>
    </source>
</reference>
<reference key="5">
    <citation type="submission" date="2006-06" db="EMBL/GenBank/DDBJ databases">
        <title>Arabidopsis ORF clones.</title>
        <authorList>
            <person name="Kim C.J."/>
            <person name="Chen H."/>
            <person name="Quinitio C."/>
            <person name="Shinn P."/>
            <person name="Ecker J.R."/>
        </authorList>
    </citation>
    <scope>NUCLEOTIDE SEQUENCE [LARGE SCALE MRNA] (ISOFORM 2)</scope>
    <source>
        <strain>cv. Columbia</strain>
    </source>
</reference>
<reference key="6">
    <citation type="submission" date="2002-03" db="EMBL/GenBank/DDBJ databases">
        <title>Full-length cDNA from Arabidopsis thaliana.</title>
        <authorList>
            <person name="Brover V.V."/>
            <person name="Troukhan M.E."/>
            <person name="Alexandrov N.A."/>
            <person name="Lu Y.-P."/>
            <person name="Flavell R.B."/>
            <person name="Feldmann K.A."/>
        </authorList>
    </citation>
    <scope>NUCLEOTIDE SEQUENCE [LARGE SCALE MRNA] (ISOFORM 1)</scope>
</reference>
<reference key="7">
    <citation type="journal article" date="2003" name="Mol. Biol. Evol.">
        <title>Evolution and divergence of the MADS-box gene family based on genome-wide expression analyses.</title>
        <authorList>
            <person name="Kofuji R."/>
            <person name="Sumikawa N."/>
            <person name="Yamasaki M."/>
            <person name="Kondo K."/>
            <person name="Ueda K."/>
            <person name="Ito M."/>
            <person name="Hasebe M."/>
        </authorList>
    </citation>
    <scope>TISSUE SPECIFICITY</scope>
    <scope>GENE FAMILY</scope>
    <source>
        <strain>cv. Columbia</strain>
    </source>
</reference>
<reference key="8">
    <citation type="journal article" date="2003" name="Plant Cell">
        <title>Molecular and phylogenetic analyses of the complete MADS-box transcription factor family in Arabidopsis: new openings to the MADS world.</title>
        <authorList>
            <person name="Parenicova L."/>
            <person name="de Folter S."/>
            <person name="Kieffer M."/>
            <person name="Horner D.S."/>
            <person name="Favalli C."/>
            <person name="Busscher J."/>
            <person name="Cook H.E."/>
            <person name="Ingram R.M."/>
            <person name="Kater M.M."/>
            <person name="Davies B."/>
            <person name="Angenent G.C."/>
            <person name="Colombo L."/>
        </authorList>
    </citation>
    <scope>TISSUE SPECIFICITY</scope>
    <scope>GENE FAMILY</scope>
    <source>
        <strain>cv. Columbia</strain>
        <tissue>Rosette leaf</tissue>
    </source>
</reference>
<reference key="9">
    <citation type="journal article" date="2005" name="Plant Mol. Biol.">
        <title>Expression of MADS-box genes during the embryonic phase in Arabidopsis.</title>
        <authorList>
            <person name="Lehti-Shiu M.D."/>
            <person name="Adamczyk B.J."/>
            <person name="Fernandez D.E."/>
        </authorList>
    </citation>
    <scope>TISSUE SPECIFICITY</scope>
</reference>
<reference key="10">
    <citation type="journal article" date="2007" name="Genome Biol.">
        <title>MADS-complexes regulate transcriptome dynamics during pollen maturation.</title>
        <authorList>
            <person name="Verelst W."/>
            <person name="Twell D."/>
            <person name="de Folter S."/>
            <person name="Immink R."/>
            <person name="Saedler H."/>
            <person name="Muenster T."/>
        </authorList>
    </citation>
    <scope>FUNCTION</scope>
    <scope>DISRUPTION PHENOTYPE</scope>
    <source>
        <strain>cv. Columbia</strain>
    </source>
</reference>
<reference key="11">
    <citation type="journal article" date="2007" name="Plant J.">
        <title>The MADS domain factors AGL15 and AGL18 act redundantly as repressors of the floral transition in Arabidopsis.</title>
        <authorList>
            <person name="Adamczyk B.J."/>
            <person name="Lehti-Shiu M.D."/>
            <person name="Fernandez D.E."/>
        </authorList>
    </citation>
    <scope>FUNCTION</scope>
    <scope>DISRUPTION PHENOTYPE</scope>
    <scope>TISSUE SPECIFICITY</scope>
    <scope>DEVELOPMENTAL STAGE</scope>
</reference>
<reference key="12">
    <citation type="journal article" date="2008" name="Plant Physiol.">
        <title>Diversification of photoperiodic response patterns in a collection of early-flowering mutants of Arabidopsis.</title>
        <authorList>
            <person name="Pouteau S."/>
            <person name="Carre I."/>
            <person name="Gaudin V."/>
            <person name="Ferret V."/>
            <person name="Lefebvre D."/>
            <person name="Wilson M."/>
        </authorList>
    </citation>
    <scope>FUNCTION</scope>
    <scope>DISRUPTION PHENOTYPE</scope>
</reference>
<name>AGL18_ARATH</name>
<feature type="chain" id="PRO_0000412531" description="Agamous-like MADS-box protein AGL18">
    <location>
        <begin position="1"/>
        <end position="256"/>
    </location>
</feature>
<feature type="domain" description="MADS-box" evidence="1">
    <location>
        <begin position="1"/>
        <end position="61"/>
    </location>
</feature>
<feature type="domain" description="K-box" evidence="2">
    <location>
        <begin position="94"/>
        <end position="184"/>
    </location>
</feature>
<feature type="region of interest" description="Disordered" evidence="3">
    <location>
        <begin position="179"/>
        <end position="232"/>
    </location>
</feature>
<feature type="compositionally biased region" description="Acidic residues" evidence="3">
    <location>
        <begin position="199"/>
        <end position="215"/>
    </location>
</feature>
<feature type="compositionally biased region" description="Polar residues" evidence="3">
    <location>
        <begin position="222"/>
        <end position="232"/>
    </location>
</feature>
<feature type="splice variant" id="VSP_041689" description="In isoform 2." evidence="12">
    <location>
        <begin position="1"/>
        <end position="61"/>
    </location>
</feature>
<feature type="splice variant" id="VSP_041690" description="In isoform 3." evidence="11">
    <original>TQILL</original>
    <variation>VKTKY</variation>
    <location>
        <begin position="150"/>
        <end position="154"/>
    </location>
</feature>
<feature type="splice variant" id="VSP_041691" description="In isoform 3." evidence="11">
    <location>
        <begin position="155"/>
        <end position="256"/>
    </location>
</feature>
<feature type="sequence conflict" description="In Ref. 6; AAM65178." evidence="13" ref="6">
    <original>G</original>
    <variation>V</variation>
    <location>
        <position position="106"/>
    </location>
</feature>
<feature type="sequence conflict" description="In Ref. 6; AAM65178." evidence="13" ref="6">
    <original>L</original>
    <variation>F</variation>
    <location>
        <position position="134"/>
    </location>
</feature>
<protein>
    <recommendedName>
        <fullName>Agamous-like MADS-box protein AGL18</fullName>
    </recommendedName>
</protein>
<gene>
    <name type="primary">AGL18</name>
    <name type="ordered locus">At3g57390</name>
    <name type="ORF">F28O9.240</name>
</gene>
<dbReference type="EMBL" id="AF312663">
    <property type="protein sequence ID" value="AAG37900.1"/>
    <property type="molecule type" value="mRNA"/>
</dbReference>
<dbReference type="EMBL" id="AL137080">
    <property type="protein sequence ID" value="CAB68145.1"/>
    <property type="molecule type" value="Genomic_DNA"/>
</dbReference>
<dbReference type="EMBL" id="CP002686">
    <property type="protein sequence ID" value="AEE79649.1"/>
    <property type="molecule type" value="Genomic_DNA"/>
</dbReference>
<dbReference type="EMBL" id="CP002686">
    <property type="protein sequence ID" value="AEE79650.1"/>
    <property type="molecule type" value="Genomic_DNA"/>
</dbReference>
<dbReference type="EMBL" id="AK220679">
    <property type="protein sequence ID" value="BAD93735.1"/>
    <property type="molecule type" value="mRNA"/>
</dbReference>
<dbReference type="EMBL" id="AK222220">
    <property type="protein sequence ID" value="BAD95389.1"/>
    <property type="molecule type" value="mRNA"/>
</dbReference>
<dbReference type="EMBL" id="BT025774">
    <property type="protein sequence ID" value="ABF83664.1"/>
    <property type="molecule type" value="mRNA"/>
</dbReference>
<dbReference type="EMBL" id="AY087639">
    <property type="protein sequence ID" value="AAM65178.1"/>
    <property type="molecule type" value="mRNA"/>
</dbReference>
<dbReference type="PIR" id="T45817">
    <property type="entry name" value="T45817"/>
</dbReference>
<dbReference type="RefSeq" id="NP_191298.1">
    <molecule id="Q9M2K8-1"/>
    <property type="nucleotide sequence ID" value="NM_115599.4"/>
</dbReference>
<dbReference type="RefSeq" id="NP_974450.1">
    <molecule id="Q9M2K8-2"/>
    <property type="nucleotide sequence ID" value="NM_202721.1"/>
</dbReference>
<dbReference type="SMR" id="Q9M2K8"/>
<dbReference type="BioGRID" id="10222">
    <property type="interactions" value="17"/>
</dbReference>
<dbReference type="FunCoup" id="Q9M2K8">
    <property type="interactions" value="36"/>
</dbReference>
<dbReference type="IntAct" id="Q9M2K8">
    <property type="interactions" value="9"/>
</dbReference>
<dbReference type="STRING" id="3702.Q9M2K8"/>
<dbReference type="PaxDb" id="3702-AT3G57390.1"/>
<dbReference type="ProteomicsDB" id="244881">
    <molecule id="Q9M2K8-1"/>
</dbReference>
<dbReference type="EnsemblPlants" id="AT3G57390.1">
    <molecule id="Q9M2K8-1"/>
    <property type="protein sequence ID" value="AT3G57390.1"/>
    <property type="gene ID" value="AT3G57390"/>
</dbReference>
<dbReference type="EnsemblPlants" id="AT3G57390.2">
    <molecule id="Q9M2K8-2"/>
    <property type="protein sequence ID" value="AT3G57390.2"/>
    <property type="gene ID" value="AT3G57390"/>
</dbReference>
<dbReference type="GeneID" id="824906"/>
<dbReference type="Gramene" id="AT3G57390.1">
    <molecule id="Q9M2K8-1"/>
    <property type="protein sequence ID" value="AT3G57390.1"/>
    <property type="gene ID" value="AT3G57390"/>
</dbReference>
<dbReference type="Gramene" id="AT3G57390.2">
    <molecule id="Q9M2K8-2"/>
    <property type="protein sequence ID" value="AT3G57390.2"/>
    <property type="gene ID" value="AT3G57390"/>
</dbReference>
<dbReference type="KEGG" id="ath:AT3G57390"/>
<dbReference type="Araport" id="AT3G57390"/>
<dbReference type="TAIR" id="AT3G57390">
    <property type="gene designation" value="AGL18"/>
</dbReference>
<dbReference type="eggNOG" id="KOG0014">
    <property type="taxonomic scope" value="Eukaryota"/>
</dbReference>
<dbReference type="HOGENOM" id="CLU_053053_0_2_1"/>
<dbReference type="InParanoid" id="Q9M2K8"/>
<dbReference type="OrthoDB" id="1898716at2759"/>
<dbReference type="PhylomeDB" id="Q9M2K8"/>
<dbReference type="PRO" id="PR:Q9M2K8"/>
<dbReference type="Proteomes" id="UP000006548">
    <property type="component" value="Chromosome 3"/>
</dbReference>
<dbReference type="ExpressionAtlas" id="Q9M2K8">
    <property type="expression patterns" value="baseline and differential"/>
</dbReference>
<dbReference type="GO" id="GO:0005634">
    <property type="term" value="C:nucleus"/>
    <property type="evidence" value="ECO:0007669"/>
    <property type="project" value="UniProtKB-SubCell"/>
</dbReference>
<dbReference type="GO" id="GO:0003700">
    <property type="term" value="F:DNA-binding transcription factor activity"/>
    <property type="evidence" value="ECO:0000250"/>
    <property type="project" value="TAIR"/>
</dbReference>
<dbReference type="GO" id="GO:0046983">
    <property type="term" value="F:protein dimerization activity"/>
    <property type="evidence" value="ECO:0007669"/>
    <property type="project" value="InterPro"/>
</dbReference>
<dbReference type="GO" id="GO:0000977">
    <property type="term" value="F:RNA polymerase II transcription regulatory region sequence-specific DNA binding"/>
    <property type="evidence" value="ECO:0007669"/>
    <property type="project" value="InterPro"/>
</dbReference>
<dbReference type="GO" id="GO:0000976">
    <property type="term" value="F:transcription cis-regulatory region binding"/>
    <property type="evidence" value="ECO:0000353"/>
    <property type="project" value="TAIR"/>
</dbReference>
<dbReference type="GO" id="GO:0009908">
    <property type="term" value="P:flower development"/>
    <property type="evidence" value="ECO:0007669"/>
    <property type="project" value="UniProtKB-KW"/>
</dbReference>
<dbReference type="GO" id="GO:0009910">
    <property type="term" value="P:negative regulation of flower development"/>
    <property type="evidence" value="ECO:0000315"/>
    <property type="project" value="UniProtKB"/>
</dbReference>
<dbReference type="GO" id="GO:0048577">
    <property type="term" value="P:negative regulation of short-day photoperiodism, flowering"/>
    <property type="evidence" value="ECO:0000315"/>
    <property type="project" value="UniProtKB"/>
</dbReference>
<dbReference type="GO" id="GO:0009555">
    <property type="term" value="P:pollen development"/>
    <property type="evidence" value="ECO:0000315"/>
    <property type="project" value="TAIR"/>
</dbReference>
<dbReference type="GO" id="GO:0045944">
    <property type="term" value="P:positive regulation of transcription by RNA polymerase II"/>
    <property type="evidence" value="ECO:0007669"/>
    <property type="project" value="InterPro"/>
</dbReference>
<dbReference type="CDD" id="cd00265">
    <property type="entry name" value="MADS_MEF2_like"/>
    <property type="match status" value="1"/>
</dbReference>
<dbReference type="FunFam" id="3.40.1810.10:FF:000049">
    <property type="match status" value="1"/>
</dbReference>
<dbReference type="Gene3D" id="3.40.1810.10">
    <property type="entry name" value="Transcription factor, MADS-box"/>
    <property type="match status" value="1"/>
</dbReference>
<dbReference type="InterPro" id="IPR050142">
    <property type="entry name" value="MADS-box/MEF2_TF"/>
</dbReference>
<dbReference type="InterPro" id="IPR033896">
    <property type="entry name" value="MEF2-like_N"/>
</dbReference>
<dbReference type="InterPro" id="IPR002487">
    <property type="entry name" value="TF_Kbox"/>
</dbReference>
<dbReference type="InterPro" id="IPR002100">
    <property type="entry name" value="TF_MADSbox"/>
</dbReference>
<dbReference type="InterPro" id="IPR036879">
    <property type="entry name" value="TF_MADSbox_sf"/>
</dbReference>
<dbReference type="PANTHER" id="PTHR48019">
    <property type="entry name" value="SERUM RESPONSE FACTOR HOMOLOG"/>
    <property type="match status" value="1"/>
</dbReference>
<dbReference type="Pfam" id="PF01486">
    <property type="entry name" value="K-box"/>
    <property type="match status" value="1"/>
</dbReference>
<dbReference type="Pfam" id="PF00319">
    <property type="entry name" value="SRF-TF"/>
    <property type="match status" value="1"/>
</dbReference>
<dbReference type="PRINTS" id="PR00404">
    <property type="entry name" value="MADSDOMAIN"/>
</dbReference>
<dbReference type="SMART" id="SM00432">
    <property type="entry name" value="MADS"/>
    <property type="match status" value="1"/>
</dbReference>
<dbReference type="SUPFAM" id="SSF55455">
    <property type="entry name" value="SRF-like"/>
    <property type="match status" value="1"/>
</dbReference>
<dbReference type="PROSITE" id="PS51297">
    <property type="entry name" value="K_BOX"/>
    <property type="match status" value="1"/>
</dbReference>
<dbReference type="PROSITE" id="PS00350">
    <property type="entry name" value="MADS_BOX_1"/>
    <property type="match status" value="1"/>
</dbReference>
<dbReference type="PROSITE" id="PS50066">
    <property type="entry name" value="MADS_BOX_2"/>
    <property type="match status" value="1"/>
</dbReference>